<organism>
    <name type="scientific">Lactococcus lactis subsp. lactis (strain IL1403)</name>
    <name type="common">Streptococcus lactis</name>
    <dbReference type="NCBI Taxonomy" id="272623"/>
    <lineage>
        <taxon>Bacteria</taxon>
        <taxon>Bacillati</taxon>
        <taxon>Bacillota</taxon>
        <taxon>Bacilli</taxon>
        <taxon>Lactobacillales</taxon>
        <taxon>Streptococcaceae</taxon>
        <taxon>Lactococcus</taxon>
    </lineage>
</organism>
<name>RL36_LACLA</name>
<feature type="chain" id="PRO_0000126197" description="Large ribosomal subunit protein bL36">
    <location>
        <begin position="1"/>
        <end position="38"/>
    </location>
</feature>
<evidence type="ECO:0000305" key="1"/>
<sequence length="38" mass="4421">MKVRPSVKPICEYCKVIRRNGRVMVICPANPKHKQRQG</sequence>
<dbReference type="EMBL" id="AE005176">
    <property type="protein sequence ID" value="AAK06169.1"/>
    <property type="molecule type" value="Genomic_DNA"/>
</dbReference>
<dbReference type="PIR" id="S17989">
    <property type="entry name" value="S17989"/>
</dbReference>
<dbReference type="RefSeq" id="NP_268228.1">
    <property type="nucleotide sequence ID" value="NC_002662.1"/>
</dbReference>
<dbReference type="RefSeq" id="WP_001808836.1">
    <property type="nucleotide sequence ID" value="NC_002662.1"/>
</dbReference>
<dbReference type="SMR" id="P0A493"/>
<dbReference type="PaxDb" id="272623-L153863"/>
<dbReference type="EnsemblBacteria" id="AAK06169">
    <property type="protein sequence ID" value="AAK06169"/>
    <property type="gene ID" value="L153863"/>
</dbReference>
<dbReference type="GeneID" id="93964224"/>
<dbReference type="KEGG" id="lla:L153863"/>
<dbReference type="PATRIC" id="fig|272623.7.peg.2230"/>
<dbReference type="eggNOG" id="COG0257">
    <property type="taxonomic scope" value="Bacteria"/>
</dbReference>
<dbReference type="HOGENOM" id="CLU_135723_6_2_9"/>
<dbReference type="OrthoDB" id="9802520at2"/>
<dbReference type="Proteomes" id="UP000002196">
    <property type="component" value="Chromosome"/>
</dbReference>
<dbReference type="GO" id="GO:0005737">
    <property type="term" value="C:cytoplasm"/>
    <property type="evidence" value="ECO:0007669"/>
    <property type="project" value="UniProtKB-ARBA"/>
</dbReference>
<dbReference type="GO" id="GO:1990904">
    <property type="term" value="C:ribonucleoprotein complex"/>
    <property type="evidence" value="ECO:0007669"/>
    <property type="project" value="UniProtKB-KW"/>
</dbReference>
<dbReference type="GO" id="GO:0005840">
    <property type="term" value="C:ribosome"/>
    <property type="evidence" value="ECO:0007669"/>
    <property type="project" value="UniProtKB-KW"/>
</dbReference>
<dbReference type="GO" id="GO:0003735">
    <property type="term" value="F:structural constituent of ribosome"/>
    <property type="evidence" value="ECO:0007669"/>
    <property type="project" value="InterPro"/>
</dbReference>
<dbReference type="GO" id="GO:0006412">
    <property type="term" value="P:translation"/>
    <property type="evidence" value="ECO:0007669"/>
    <property type="project" value="UniProtKB-UniRule"/>
</dbReference>
<dbReference type="HAMAP" id="MF_00251">
    <property type="entry name" value="Ribosomal_bL36"/>
    <property type="match status" value="1"/>
</dbReference>
<dbReference type="InterPro" id="IPR000473">
    <property type="entry name" value="Ribosomal_bL36"/>
</dbReference>
<dbReference type="InterPro" id="IPR035977">
    <property type="entry name" value="Ribosomal_bL36_sp"/>
</dbReference>
<dbReference type="NCBIfam" id="TIGR01022">
    <property type="entry name" value="rpmJ_bact"/>
    <property type="match status" value="1"/>
</dbReference>
<dbReference type="PANTHER" id="PTHR42888">
    <property type="entry name" value="50S RIBOSOMAL PROTEIN L36, CHLOROPLASTIC"/>
    <property type="match status" value="1"/>
</dbReference>
<dbReference type="PANTHER" id="PTHR42888:SF1">
    <property type="entry name" value="LARGE RIBOSOMAL SUBUNIT PROTEIN BL36C"/>
    <property type="match status" value="1"/>
</dbReference>
<dbReference type="Pfam" id="PF00444">
    <property type="entry name" value="Ribosomal_L36"/>
    <property type="match status" value="1"/>
</dbReference>
<dbReference type="SUPFAM" id="SSF57840">
    <property type="entry name" value="Ribosomal protein L36"/>
    <property type="match status" value="1"/>
</dbReference>
<dbReference type="PROSITE" id="PS00828">
    <property type="entry name" value="RIBOSOMAL_L36"/>
    <property type="match status" value="1"/>
</dbReference>
<reference key="1">
    <citation type="journal article" date="2001" name="Genome Res.">
        <title>The complete genome sequence of the lactic acid bacterium Lactococcus lactis ssp. lactis IL1403.</title>
        <authorList>
            <person name="Bolotin A."/>
            <person name="Wincker P."/>
            <person name="Mauger S."/>
            <person name="Jaillon O."/>
            <person name="Malarme K."/>
            <person name="Weissenbach J."/>
            <person name="Ehrlich S.D."/>
            <person name="Sorokin A."/>
        </authorList>
    </citation>
    <scope>NUCLEOTIDE SEQUENCE [LARGE SCALE GENOMIC DNA]</scope>
    <source>
        <strain>IL1403</strain>
    </source>
</reference>
<proteinExistence type="inferred from homology"/>
<gene>
    <name type="primary">rpmJ</name>
    <name type="ordered locus">LL2071</name>
    <name type="ORF">L153863</name>
</gene>
<keyword id="KW-1185">Reference proteome</keyword>
<keyword id="KW-0687">Ribonucleoprotein</keyword>
<keyword id="KW-0689">Ribosomal protein</keyword>
<protein>
    <recommendedName>
        <fullName evidence="1">Large ribosomal subunit protein bL36</fullName>
    </recommendedName>
    <alternativeName>
        <fullName>50S ribosomal protein L36</fullName>
    </alternativeName>
</protein>
<comment type="similarity">
    <text evidence="1">Belongs to the bacterial ribosomal protein bL36 family.</text>
</comment>
<accession>P0A493</accession>
<accession>P27146</accession>